<dbReference type="EC" id="2.4.99.17" evidence="1"/>
<dbReference type="EMBL" id="AL591979">
    <property type="protein sequence ID" value="CAC99609.1"/>
    <property type="molecule type" value="Genomic_DNA"/>
</dbReference>
<dbReference type="PIR" id="AC1266">
    <property type="entry name" value="AC1266"/>
</dbReference>
<dbReference type="RefSeq" id="NP_465056.1">
    <property type="nucleotide sequence ID" value="NC_003210.1"/>
</dbReference>
<dbReference type="RefSeq" id="WP_003723535.1">
    <property type="nucleotide sequence ID" value="NZ_CP149495.1"/>
</dbReference>
<dbReference type="SMR" id="Q8Y6Z9"/>
<dbReference type="STRING" id="169963.gene:17594188"/>
<dbReference type="PaxDb" id="169963-lmo1531"/>
<dbReference type="EnsemblBacteria" id="CAC99609">
    <property type="protein sequence ID" value="CAC99609"/>
    <property type="gene ID" value="CAC99609"/>
</dbReference>
<dbReference type="GeneID" id="987806"/>
<dbReference type="KEGG" id="lmo:lmo1531"/>
<dbReference type="PATRIC" id="fig|169963.11.peg.1572"/>
<dbReference type="eggNOG" id="COG0809">
    <property type="taxonomic scope" value="Bacteria"/>
</dbReference>
<dbReference type="HOGENOM" id="CLU_039110_1_0_9"/>
<dbReference type="OrthoDB" id="9805933at2"/>
<dbReference type="PhylomeDB" id="Q8Y6Z9"/>
<dbReference type="BioCyc" id="LMON169963:LMO1531-MONOMER"/>
<dbReference type="UniPathway" id="UPA00392"/>
<dbReference type="Proteomes" id="UP000000817">
    <property type="component" value="Chromosome"/>
</dbReference>
<dbReference type="GO" id="GO:0005737">
    <property type="term" value="C:cytoplasm"/>
    <property type="evidence" value="ECO:0007669"/>
    <property type="project" value="UniProtKB-SubCell"/>
</dbReference>
<dbReference type="GO" id="GO:0051075">
    <property type="term" value="F:S-adenosylmethionine:tRNA ribosyltransferase-isomerase activity"/>
    <property type="evidence" value="ECO:0000318"/>
    <property type="project" value="GO_Central"/>
</dbReference>
<dbReference type="GO" id="GO:0008616">
    <property type="term" value="P:queuosine biosynthetic process"/>
    <property type="evidence" value="ECO:0000318"/>
    <property type="project" value="GO_Central"/>
</dbReference>
<dbReference type="GO" id="GO:0002099">
    <property type="term" value="P:tRNA wobble guanine modification"/>
    <property type="evidence" value="ECO:0000318"/>
    <property type="project" value="GO_Central"/>
</dbReference>
<dbReference type="FunFam" id="2.40.10.240:FF:000002">
    <property type="entry name" value="S-adenosylmethionine:tRNA ribosyltransferase-isomerase"/>
    <property type="match status" value="1"/>
</dbReference>
<dbReference type="FunFam" id="3.40.1780.10:FF:000001">
    <property type="entry name" value="S-adenosylmethionine:tRNA ribosyltransferase-isomerase"/>
    <property type="match status" value="1"/>
</dbReference>
<dbReference type="Gene3D" id="2.40.10.240">
    <property type="entry name" value="QueA-like"/>
    <property type="match status" value="1"/>
</dbReference>
<dbReference type="Gene3D" id="3.40.1780.10">
    <property type="entry name" value="QueA-like"/>
    <property type="match status" value="1"/>
</dbReference>
<dbReference type="HAMAP" id="MF_00113">
    <property type="entry name" value="QueA"/>
    <property type="match status" value="1"/>
</dbReference>
<dbReference type="InterPro" id="IPR003699">
    <property type="entry name" value="QueA"/>
</dbReference>
<dbReference type="InterPro" id="IPR042118">
    <property type="entry name" value="QueA_dom1"/>
</dbReference>
<dbReference type="InterPro" id="IPR042119">
    <property type="entry name" value="QueA_dom2"/>
</dbReference>
<dbReference type="InterPro" id="IPR036100">
    <property type="entry name" value="QueA_sf"/>
</dbReference>
<dbReference type="NCBIfam" id="NF001140">
    <property type="entry name" value="PRK00147.1"/>
    <property type="match status" value="1"/>
</dbReference>
<dbReference type="NCBIfam" id="TIGR00113">
    <property type="entry name" value="queA"/>
    <property type="match status" value="1"/>
</dbReference>
<dbReference type="PANTHER" id="PTHR30307">
    <property type="entry name" value="S-ADENOSYLMETHIONINE:TRNA RIBOSYLTRANSFERASE-ISOMERASE"/>
    <property type="match status" value="1"/>
</dbReference>
<dbReference type="PANTHER" id="PTHR30307:SF0">
    <property type="entry name" value="S-ADENOSYLMETHIONINE:TRNA RIBOSYLTRANSFERASE-ISOMERASE"/>
    <property type="match status" value="1"/>
</dbReference>
<dbReference type="Pfam" id="PF02547">
    <property type="entry name" value="Queuosine_synth"/>
    <property type="match status" value="1"/>
</dbReference>
<dbReference type="SUPFAM" id="SSF111337">
    <property type="entry name" value="QueA-like"/>
    <property type="match status" value="1"/>
</dbReference>
<feature type="chain" id="PRO_0000165415" description="S-adenosylmethionine:tRNA ribosyltransferase-isomerase">
    <location>
        <begin position="1"/>
        <end position="342"/>
    </location>
</feature>
<gene>
    <name evidence="1" type="primary">queA</name>
    <name type="ordered locus">lmo1531</name>
</gene>
<proteinExistence type="inferred from homology"/>
<name>QUEA_LISMO</name>
<protein>
    <recommendedName>
        <fullName evidence="1">S-adenosylmethionine:tRNA ribosyltransferase-isomerase</fullName>
        <ecNumber evidence="1">2.4.99.17</ecNumber>
    </recommendedName>
    <alternativeName>
        <fullName evidence="1">Queuosine biosynthesis protein QueA</fullName>
    </alternativeName>
</protein>
<evidence type="ECO:0000255" key="1">
    <source>
        <dbReference type="HAMAP-Rule" id="MF_00113"/>
    </source>
</evidence>
<keyword id="KW-0963">Cytoplasm</keyword>
<keyword id="KW-0671">Queuosine biosynthesis</keyword>
<keyword id="KW-1185">Reference proteome</keyword>
<keyword id="KW-0949">S-adenosyl-L-methionine</keyword>
<keyword id="KW-0808">Transferase</keyword>
<organism>
    <name type="scientific">Listeria monocytogenes serovar 1/2a (strain ATCC BAA-679 / EGD-e)</name>
    <dbReference type="NCBI Taxonomy" id="169963"/>
    <lineage>
        <taxon>Bacteria</taxon>
        <taxon>Bacillati</taxon>
        <taxon>Bacillota</taxon>
        <taxon>Bacilli</taxon>
        <taxon>Bacillales</taxon>
        <taxon>Listeriaceae</taxon>
        <taxon>Listeria</taxon>
    </lineage>
</organism>
<comment type="function">
    <text evidence="1">Transfers and isomerizes the ribose moiety from AdoMet to the 7-aminomethyl group of 7-deazaguanine (preQ1-tRNA) to give epoxyqueuosine (oQ-tRNA).</text>
</comment>
<comment type="catalytic activity">
    <reaction evidence="1">
        <text>7-aminomethyl-7-carbaguanosine(34) in tRNA + S-adenosyl-L-methionine = epoxyqueuosine(34) in tRNA + adenine + L-methionine + 2 H(+)</text>
        <dbReference type="Rhea" id="RHEA:32155"/>
        <dbReference type="Rhea" id="RHEA-COMP:10342"/>
        <dbReference type="Rhea" id="RHEA-COMP:18582"/>
        <dbReference type="ChEBI" id="CHEBI:15378"/>
        <dbReference type="ChEBI" id="CHEBI:16708"/>
        <dbReference type="ChEBI" id="CHEBI:57844"/>
        <dbReference type="ChEBI" id="CHEBI:59789"/>
        <dbReference type="ChEBI" id="CHEBI:82833"/>
        <dbReference type="ChEBI" id="CHEBI:194443"/>
        <dbReference type="EC" id="2.4.99.17"/>
    </reaction>
</comment>
<comment type="pathway">
    <text evidence="1">tRNA modification; tRNA-queuosine biosynthesis.</text>
</comment>
<comment type="subunit">
    <text evidence="1">Monomer.</text>
</comment>
<comment type="subcellular location">
    <subcellularLocation>
        <location evidence="1">Cytoplasm</location>
    </subcellularLocation>
</comment>
<comment type="similarity">
    <text evidence="1">Belongs to the QueA family.</text>
</comment>
<sequence>MKVEDFDFDLPEELIAQTPLLDRTSSRLMVLDKESGDIKDQHFTDIISYLNEGDALVLNDTRVLPARLHGIKDETGAHIEVLLLKQKEGNAWETLVKPAKRIRKGATITFGDGALKATCLEELEHGGRILEFSYEGIFYEVLEQLGEMPLPPYIKEQLADQDRYQTVYAKENGSAAAPTAGLHFTEDLLEQISAKGVEIIFVTLHVGLGTFRPVDVEDTTNHKMHSEFYRLTEESAERINKIKAQGGKVVAVGTTSIRTLETIASRHDGKLVAESGWTEIFISPGYTFQAVDALITNFHLPKSTLIMLVSALSDRTKILAAYNHAVEEQYRFFSFGDAMFIH</sequence>
<reference key="1">
    <citation type="journal article" date="2001" name="Science">
        <title>Comparative genomics of Listeria species.</title>
        <authorList>
            <person name="Glaser P."/>
            <person name="Frangeul L."/>
            <person name="Buchrieser C."/>
            <person name="Rusniok C."/>
            <person name="Amend A."/>
            <person name="Baquero F."/>
            <person name="Berche P."/>
            <person name="Bloecker H."/>
            <person name="Brandt P."/>
            <person name="Chakraborty T."/>
            <person name="Charbit A."/>
            <person name="Chetouani F."/>
            <person name="Couve E."/>
            <person name="de Daruvar A."/>
            <person name="Dehoux P."/>
            <person name="Domann E."/>
            <person name="Dominguez-Bernal G."/>
            <person name="Duchaud E."/>
            <person name="Durant L."/>
            <person name="Dussurget O."/>
            <person name="Entian K.-D."/>
            <person name="Fsihi H."/>
            <person name="Garcia-del Portillo F."/>
            <person name="Garrido P."/>
            <person name="Gautier L."/>
            <person name="Goebel W."/>
            <person name="Gomez-Lopez N."/>
            <person name="Hain T."/>
            <person name="Hauf J."/>
            <person name="Jackson D."/>
            <person name="Jones L.-M."/>
            <person name="Kaerst U."/>
            <person name="Kreft J."/>
            <person name="Kuhn M."/>
            <person name="Kunst F."/>
            <person name="Kurapkat G."/>
            <person name="Madueno E."/>
            <person name="Maitournam A."/>
            <person name="Mata Vicente J."/>
            <person name="Ng E."/>
            <person name="Nedjari H."/>
            <person name="Nordsiek G."/>
            <person name="Novella S."/>
            <person name="de Pablos B."/>
            <person name="Perez-Diaz J.-C."/>
            <person name="Purcell R."/>
            <person name="Remmel B."/>
            <person name="Rose M."/>
            <person name="Schlueter T."/>
            <person name="Simoes N."/>
            <person name="Tierrez A."/>
            <person name="Vazquez-Boland J.-A."/>
            <person name="Voss H."/>
            <person name="Wehland J."/>
            <person name="Cossart P."/>
        </authorList>
    </citation>
    <scope>NUCLEOTIDE SEQUENCE [LARGE SCALE GENOMIC DNA]</scope>
    <source>
        <strain>ATCC BAA-679 / EGD-e</strain>
    </source>
</reference>
<accession>Q8Y6Z9</accession>